<reference key="1">
    <citation type="submission" date="2007-12" db="EMBL/GenBank/DDBJ databases">
        <title>Complete sequence of chromosome of Francisella philomiragia subsp. philomiragia ATCC 25017.</title>
        <authorList>
            <consortium name="US DOE Joint Genome Institute"/>
            <person name="Copeland A."/>
            <person name="Lucas S."/>
            <person name="Lapidus A."/>
            <person name="Barry K."/>
            <person name="Detter J.C."/>
            <person name="Glavina del Rio T."/>
            <person name="Hammon N."/>
            <person name="Israni S."/>
            <person name="Dalin E."/>
            <person name="Tice H."/>
            <person name="Pitluck S."/>
            <person name="Chain P."/>
            <person name="Malfatti S."/>
            <person name="Shin M."/>
            <person name="Vergez L."/>
            <person name="Schmutz J."/>
            <person name="Larimer F."/>
            <person name="Land M."/>
            <person name="Hauser L."/>
            <person name="Richardson P."/>
        </authorList>
    </citation>
    <scope>NUCLEOTIDE SEQUENCE [LARGE SCALE GENOMIC DNA]</scope>
    <source>
        <strain>ATCC 25017 / CCUG 19701 / FSC 153 / O#319-036</strain>
    </source>
</reference>
<comment type="function">
    <text evidence="1">Phosphorylation of dTMP to form dTDP in both de novo and salvage pathways of dTTP synthesis.</text>
</comment>
<comment type="catalytic activity">
    <reaction evidence="1">
        <text>dTMP + ATP = dTDP + ADP</text>
        <dbReference type="Rhea" id="RHEA:13517"/>
        <dbReference type="ChEBI" id="CHEBI:30616"/>
        <dbReference type="ChEBI" id="CHEBI:58369"/>
        <dbReference type="ChEBI" id="CHEBI:63528"/>
        <dbReference type="ChEBI" id="CHEBI:456216"/>
        <dbReference type="EC" id="2.7.4.9"/>
    </reaction>
</comment>
<comment type="similarity">
    <text evidence="1">Belongs to the thymidylate kinase family.</text>
</comment>
<keyword id="KW-0067">ATP-binding</keyword>
<keyword id="KW-0418">Kinase</keyword>
<keyword id="KW-0545">Nucleotide biosynthesis</keyword>
<keyword id="KW-0547">Nucleotide-binding</keyword>
<keyword id="KW-0808">Transferase</keyword>
<feature type="chain" id="PRO_1000097396" description="Thymidylate kinase">
    <location>
        <begin position="1"/>
        <end position="204"/>
    </location>
</feature>
<feature type="binding site" evidence="1">
    <location>
        <begin position="9"/>
        <end position="16"/>
    </location>
    <ligand>
        <name>ATP</name>
        <dbReference type="ChEBI" id="CHEBI:30616"/>
    </ligand>
</feature>
<accession>B0TWY5</accession>
<protein>
    <recommendedName>
        <fullName evidence="1">Thymidylate kinase</fullName>
        <ecNumber evidence="1">2.7.4.9</ecNumber>
    </recommendedName>
    <alternativeName>
        <fullName evidence="1">dTMP kinase</fullName>
    </alternativeName>
</protein>
<evidence type="ECO:0000255" key="1">
    <source>
        <dbReference type="HAMAP-Rule" id="MF_00165"/>
    </source>
</evidence>
<gene>
    <name evidence="1" type="primary">tmk</name>
    <name type="ordered locus">Fphi_1019</name>
</gene>
<dbReference type="EC" id="2.7.4.9" evidence="1"/>
<dbReference type="EMBL" id="CP000937">
    <property type="protein sequence ID" value="ABZ87243.1"/>
    <property type="molecule type" value="Genomic_DNA"/>
</dbReference>
<dbReference type="SMR" id="B0TWY5"/>
<dbReference type="KEGG" id="fph:Fphi_1019"/>
<dbReference type="eggNOG" id="COG0125">
    <property type="taxonomic scope" value="Bacteria"/>
</dbReference>
<dbReference type="HOGENOM" id="CLU_049131_0_1_6"/>
<dbReference type="GO" id="GO:0005829">
    <property type="term" value="C:cytosol"/>
    <property type="evidence" value="ECO:0007669"/>
    <property type="project" value="TreeGrafter"/>
</dbReference>
<dbReference type="GO" id="GO:0005524">
    <property type="term" value="F:ATP binding"/>
    <property type="evidence" value="ECO:0007669"/>
    <property type="project" value="UniProtKB-UniRule"/>
</dbReference>
<dbReference type="GO" id="GO:0004798">
    <property type="term" value="F:dTMP kinase activity"/>
    <property type="evidence" value="ECO:0007669"/>
    <property type="project" value="UniProtKB-UniRule"/>
</dbReference>
<dbReference type="GO" id="GO:0006233">
    <property type="term" value="P:dTDP biosynthetic process"/>
    <property type="evidence" value="ECO:0007669"/>
    <property type="project" value="InterPro"/>
</dbReference>
<dbReference type="GO" id="GO:0006235">
    <property type="term" value="P:dTTP biosynthetic process"/>
    <property type="evidence" value="ECO:0007669"/>
    <property type="project" value="UniProtKB-UniRule"/>
</dbReference>
<dbReference type="GO" id="GO:0006227">
    <property type="term" value="P:dUDP biosynthetic process"/>
    <property type="evidence" value="ECO:0007669"/>
    <property type="project" value="TreeGrafter"/>
</dbReference>
<dbReference type="CDD" id="cd01672">
    <property type="entry name" value="TMPK"/>
    <property type="match status" value="1"/>
</dbReference>
<dbReference type="FunFam" id="3.40.50.300:FF:000225">
    <property type="entry name" value="Thymidylate kinase"/>
    <property type="match status" value="1"/>
</dbReference>
<dbReference type="Gene3D" id="3.40.50.300">
    <property type="entry name" value="P-loop containing nucleotide triphosphate hydrolases"/>
    <property type="match status" value="1"/>
</dbReference>
<dbReference type="HAMAP" id="MF_00165">
    <property type="entry name" value="Thymidylate_kinase"/>
    <property type="match status" value="1"/>
</dbReference>
<dbReference type="InterPro" id="IPR027417">
    <property type="entry name" value="P-loop_NTPase"/>
</dbReference>
<dbReference type="InterPro" id="IPR039430">
    <property type="entry name" value="Thymidylate_kin-like_dom"/>
</dbReference>
<dbReference type="InterPro" id="IPR018095">
    <property type="entry name" value="Thymidylate_kin_CS"/>
</dbReference>
<dbReference type="InterPro" id="IPR018094">
    <property type="entry name" value="Thymidylate_kinase"/>
</dbReference>
<dbReference type="NCBIfam" id="TIGR00041">
    <property type="entry name" value="DTMP_kinase"/>
    <property type="match status" value="1"/>
</dbReference>
<dbReference type="PANTHER" id="PTHR10344">
    <property type="entry name" value="THYMIDYLATE KINASE"/>
    <property type="match status" value="1"/>
</dbReference>
<dbReference type="PANTHER" id="PTHR10344:SF4">
    <property type="entry name" value="UMP-CMP KINASE 2, MITOCHONDRIAL"/>
    <property type="match status" value="1"/>
</dbReference>
<dbReference type="Pfam" id="PF02223">
    <property type="entry name" value="Thymidylate_kin"/>
    <property type="match status" value="1"/>
</dbReference>
<dbReference type="SUPFAM" id="SSF52540">
    <property type="entry name" value="P-loop containing nucleoside triphosphate hydrolases"/>
    <property type="match status" value="1"/>
</dbReference>
<dbReference type="PROSITE" id="PS01331">
    <property type="entry name" value="THYMIDYLATE_KINASE"/>
    <property type="match status" value="1"/>
</dbReference>
<sequence length="204" mass="22636">MSKFIVIEGLDGAGKSTAIGFIKKYLDSKSLAAVYTREPGGTKVAEELRSIVLHNDYDEEIHPDSELLMIYAGRIQHYRNLIAPALTKGVNVVSDRFYWSSIAYQGGGRELGVDKLNVLNETFLKDCQPDLIIYLDIDPAIGLARAGKVGSPDRIEKAGLAFFDRTRAVFKSLVAANHNAYEIDASQSIDVIEKEIYAILDKYF</sequence>
<proteinExistence type="inferred from homology"/>
<organism>
    <name type="scientific">Francisella philomiragia subsp. philomiragia (strain ATCC 25017 / CCUG 19701 / FSC 153 / O#319-036)</name>
    <dbReference type="NCBI Taxonomy" id="484022"/>
    <lineage>
        <taxon>Bacteria</taxon>
        <taxon>Pseudomonadati</taxon>
        <taxon>Pseudomonadota</taxon>
        <taxon>Gammaproteobacteria</taxon>
        <taxon>Thiotrichales</taxon>
        <taxon>Francisellaceae</taxon>
        <taxon>Francisella</taxon>
    </lineage>
</organism>
<name>KTHY_FRAP2</name>